<feature type="chain" id="PRO_1000097098" description="Pantothenate synthetase">
    <location>
        <begin position="1"/>
        <end position="283"/>
    </location>
</feature>
<feature type="active site" description="Proton donor" evidence="1">
    <location>
        <position position="37"/>
    </location>
</feature>
<feature type="binding site" evidence="1">
    <location>
        <begin position="30"/>
        <end position="37"/>
    </location>
    <ligand>
        <name>ATP</name>
        <dbReference type="ChEBI" id="CHEBI:30616"/>
    </ligand>
</feature>
<feature type="binding site" evidence="1">
    <location>
        <position position="61"/>
    </location>
    <ligand>
        <name>(R)-pantoate</name>
        <dbReference type="ChEBI" id="CHEBI:15980"/>
    </ligand>
</feature>
<feature type="binding site" evidence="1">
    <location>
        <position position="61"/>
    </location>
    <ligand>
        <name>beta-alanine</name>
        <dbReference type="ChEBI" id="CHEBI:57966"/>
    </ligand>
</feature>
<feature type="binding site" evidence="1">
    <location>
        <begin position="149"/>
        <end position="152"/>
    </location>
    <ligand>
        <name>ATP</name>
        <dbReference type="ChEBI" id="CHEBI:30616"/>
    </ligand>
</feature>
<feature type="binding site" evidence="1">
    <location>
        <position position="155"/>
    </location>
    <ligand>
        <name>(R)-pantoate</name>
        <dbReference type="ChEBI" id="CHEBI:15980"/>
    </ligand>
</feature>
<feature type="binding site" evidence="1">
    <location>
        <position position="178"/>
    </location>
    <ligand>
        <name>ATP</name>
        <dbReference type="ChEBI" id="CHEBI:30616"/>
    </ligand>
</feature>
<feature type="binding site" evidence="1">
    <location>
        <begin position="186"/>
        <end position="189"/>
    </location>
    <ligand>
        <name>ATP</name>
        <dbReference type="ChEBI" id="CHEBI:30616"/>
    </ligand>
</feature>
<gene>
    <name evidence="1" type="primary">panC</name>
    <name type="ordered locus">SARI_02817</name>
</gene>
<dbReference type="EC" id="6.3.2.1" evidence="1"/>
<dbReference type="EMBL" id="CP000880">
    <property type="protein sequence ID" value="ABX22665.1"/>
    <property type="molecule type" value="Genomic_DNA"/>
</dbReference>
<dbReference type="SMR" id="A9MPM2"/>
<dbReference type="STRING" id="41514.SARI_02817"/>
<dbReference type="KEGG" id="ses:SARI_02817"/>
<dbReference type="HOGENOM" id="CLU_047148_0_0_6"/>
<dbReference type="UniPathway" id="UPA00028">
    <property type="reaction ID" value="UER00005"/>
</dbReference>
<dbReference type="Proteomes" id="UP000002084">
    <property type="component" value="Chromosome"/>
</dbReference>
<dbReference type="GO" id="GO:0005829">
    <property type="term" value="C:cytosol"/>
    <property type="evidence" value="ECO:0007669"/>
    <property type="project" value="TreeGrafter"/>
</dbReference>
<dbReference type="GO" id="GO:0005524">
    <property type="term" value="F:ATP binding"/>
    <property type="evidence" value="ECO:0007669"/>
    <property type="project" value="UniProtKB-KW"/>
</dbReference>
<dbReference type="GO" id="GO:0004592">
    <property type="term" value="F:pantoate-beta-alanine ligase activity"/>
    <property type="evidence" value="ECO:0007669"/>
    <property type="project" value="UniProtKB-UniRule"/>
</dbReference>
<dbReference type="GO" id="GO:0015940">
    <property type="term" value="P:pantothenate biosynthetic process"/>
    <property type="evidence" value="ECO:0007669"/>
    <property type="project" value="UniProtKB-UniRule"/>
</dbReference>
<dbReference type="CDD" id="cd00560">
    <property type="entry name" value="PanC"/>
    <property type="match status" value="1"/>
</dbReference>
<dbReference type="FunFam" id="3.30.1300.10:FF:000001">
    <property type="entry name" value="Pantothenate synthetase"/>
    <property type="match status" value="1"/>
</dbReference>
<dbReference type="FunFam" id="3.40.50.620:FF:000013">
    <property type="entry name" value="Pantothenate synthetase"/>
    <property type="match status" value="1"/>
</dbReference>
<dbReference type="Gene3D" id="3.40.50.620">
    <property type="entry name" value="HUPs"/>
    <property type="match status" value="1"/>
</dbReference>
<dbReference type="Gene3D" id="3.30.1300.10">
    <property type="entry name" value="Pantoate-beta-alanine ligase, C-terminal domain"/>
    <property type="match status" value="1"/>
</dbReference>
<dbReference type="HAMAP" id="MF_00158">
    <property type="entry name" value="PanC"/>
    <property type="match status" value="1"/>
</dbReference>
<dbReference type="InterPro" id="IPR003721">
    <property type="entry name" value="Pantoate_ligase"/>
</dbReference>
<dbReference type="InterPro" id="IPR042176">
    <property type="entry name" value="Pantoate_ligase_C"/>
</dbReference>
<dbReference type="InterPro" id="IPR014729">
    <property type="entry name" value="Rossmann-like_a/b/a_fold"/>
</dbReference>
<dbReference type="NCBIfam" id="TIGR00018">
    <property type="entry name" value="panC"/>
    <property type="match status" value="1"/>
</dbReference>
<dbReference type="PANTHER" id="PTHR21299">
    <property type="entry name" value="CYTIDYLATE KINASE/PANTOATE-BETA-ALANINE LIGASE"/>
    <property type="match status" value="1"/>
</dbReference>
<dbReference type="PANTHER" id="PTHR21299:SF1">
    <property type="entry name" value="PANTOATE--BETA-ALANINE LIGASE"/>
    <property type="match status" value="1"/>
</dbReference>
<dbReference type="Pfam" id="PF02569">
    <property type="entry name" value="Pantoate_ligase"/>
    <property type="match status" value="1"/>
</dbReference>
<dbReference type="SUPFAM" id="SSF52374">
    <property type="entry name" value="Nucleotidylyl transferase"/>
    <property type="match status" value="1"/>
</dbReference>
<organism>
    <name type="scientific">Salmonella arizonae (strain ATCC BAA-731 / CDC346-86 / RSK2980)</name>
    <dbReference type="NCBI Taxonomy" id="41514"/>
    <lineage>
        <taxon>Bacteria</taxon>
        <taxon>Pseudomonadati</taxon>
        <taxon>Pseudomonadota</taxon>
        <taxon>Gammaproteobacteria</taxon>
        <taxon>Enterobacterales</taxon>
        <taxon>Enterobacteriaceae</taxon>
        <taxon>Salmonella</taxon>
    </lineage>
</organism>
<reference key="1">
    <citation type="submission" date="2007-11" db="EMBL/GenBank/DDBJ databases">
        <authorList>
            <consortium name="The Salmonella enterica serovar Arizonae Genome Sequencing Project"/>
            <person name="McClelland M."/>
            <person name="Sanderson E.K."/>
            <person name="Porwollik S."/>
            <person name="Spieth J."/>
            <person name="Clifton W.S."/>
            <person name="Fulton R."/>
            <person name="Chunyan W."/>
            <person name="Wollam A."/>
            <person name="Shah N."/>
            <person name="Pepin K."/>
            <person name="Bhonagiri V."/>
            <person name="Nash W."/>
            <person name="Johnson M."/>
            <person name="Thiruvilangam P."/>
            <person name="Wilson R."/>
        </authorList>
    </citation>
    <scope>NUCLEOTIDE SEQUENCE [LARGE SCALE GENOMIC DNA]</scope>
    <source>
        <strain>ATCC BAA-731 / CDC346-86 / RSK2980</strain>
    </source>
</reference>
<evidence type="ECO:0000255" key="1">
    <source>
        <dbReference type="HAMAP-Rule" id="MF_00158"/>
    </source>
</evidence>
<keyword id="KW-0067">ATP-binding</keyword>
<keyword id="KW-0963">Cytoplasm</keyword>
<keyword id="KW-0436">Ligase</keyword>
<keyword id="KW-0547">Nucleotide-binding</keyword>
<keyword id="KW-0566">Pantothenate biosynthesis</keyword>
<keyword id="KW-1185">Reference proteome</keyword>
<proteinExistence type="inferred from homology"/>
<protein>
    <recommendedName>
        <fullName evidence="1">Pantothenate synthetase</fullName>
        <shortName evidence="1">PS</shortName>
        <ecNumber evidence="1">6.3.2.1</ecNumber>
    </recommendedName>
    <alternativeName>
        <fullName evidence="1">Pantoate--beta-alanine ligase</fullName>
    </alternativeName>
    <alternativeName>
        <fullName evidence="1">Pantoate-activating enzyme</fullName>
    </alternativeName>
</protein>
<accession>A9MPM2</accession>
<sequence>MLIIETLPLLRQHIRRLRLEGKRIALVPTMGNLHDGHMKLVDEAQDRADVVVASIFVNPMQFDRPDDLARYPRTLQEDCEKLNKRKVDIIFTPSPDQIYPQGTEGQTYVEVPGLSTMLEGASRPGHFRGVSTIVSKLFNLVQPDIACFGEKDFQQLQLIRKMVADMGYDIEIVGVPIVRAKDGLALSSRNGYLTAEQRKIAPGLYKVMSELGEKLQAGERDLEEMIAIAGQELNEKGFRPDDIQIRDADTLFELTDASKRVVILMSAWLGQARLIDNKIIELS</sequence>
<comment type="function">
    <text evidence="1">Catalyzes the condensation of pantoate with beta-alanine in an ATP-dependent reaction via a pantoyl-adenylate intermediate.</text>
</comment>
<comment type="catalytic activity">
    <reaction evidence="1">
        <text>(R)-pantoate + beta-alanine + ATP = (R)-pantothenate + AMP + diphosphate + H(+)</text>
        <dbReference type="Rhea" id="RHEA:10912"/>
        <dbReference type="ChEBI" id="CHEBI:15378"/>
        <dbReference type="ChEBI" id="CHEBI:15980"/>
        <dbReference type="ChEBI" id="CHEBI:29032"/>
        <dbReference type="ChEBI" id="CHEBI:30616"/>
        <dbReference type="ChEBI" id="CHEBI:33019"/>
        <dbReference type="ChEBI" id="CHEBI:57966"/>
        <dbReference type="ChEBI" id="CHEBI:456215"/>
        <dbReference type="EC" id="6.3.2.1"/>
    </reaction>
</comment>
<comment type="pathway">
    <text evidence="1">Cofactor biosynthesis; (R)-pantothenate biosynthesis; (R)-pantothenate from (R)-pantoate and beta-alanine: step 1/1.</text>
</comment>
<comment type="subunit">
    <text evidence="1">Homodimer.</text>
</comment>
<comment type="subcellular location">
    <subcellularLocation>
        <location evidence="1">Cytoplasm</location>
    </subcellularLocation>
</comment>
<comment type="miscellaneous">
    <text evidence="1">The reaction proceeds by a bi uni uni bi ping pong mechanism.</text>
</comment>
<comment type="similarity">
    <text evidence="1">Belongs to the pantothenate synthetase family.</text>
</comment>
<name>PANC_SALAR</name>